<comment type="function">
    <text evidence="1">Catalyzes the CTP-dependent phosphorylation of riboflavin (vitamin B2) to form flavin mononucleotide (FMN).</text>
</comment>
<comment type="catalytic activity">
    <reaction evidence="1">
        <text>riboflavin + CTP = CDP + FMN + H(+)</text>
        <dbReference type="Rhea" id="RHEA:25021"/>
        <dbReference type="ChEBI" id="CHEBI:15378"/>
        <dbReference type="ChEBI" id="CHEBI:37563"/>
        <dbReference type="ChEBI" id="CHEBI:57986"/>
        <dbReference type="ChEBI" id="CHEBI:58069"/>
        <dbReference type="ChEBI" id="CHEBI:58210"/>
        <dbReference type="EC" id="2.7.1.161"/>
    </reaction>
</comment>
<comment type="cofactor">
    <cofactor evidence="1">
        <name>Mg(2+)</name>
        <dbReference type="ChEBI" id="CHEBI:18420"/>
    </cofactor>
    <text evidence="1">Binds 1 Mg(2+) ion per subunit.</text>
</comment>
<comment type="pathway">
    <text evidence="1">Cofactor biosynthesis; FMN biosynthesis; FMN from riboflavin (CTP route): step 1/1.</text>
</comment>
<comment type="similarity">
    <text evidence="1">Belongs to the archaeal riboflavin kinase family.</text>
</comment>
<gene>
    <name evidence="1" type="primary">ribK</name>
    <name type="ordered locus">MTH_1500</name>
</gene>
<sequence length="122" mass="13438">MKSGFGEGAYFITRSVYRDQFREKLGFDPFPGTLNIEVGDPEIVERIREGAPVIQGGGGFGDVLYVKALLNGVVEGAILFPLKTHHRQGCLEFVAPVNLRKTLKLRDGDTVSLDIDTSEIQE</sequence>
<accession>O27544</accession>
<proteinExistence type="inferred from homology"/>
<protein>
    <recommendedName>
        <fullName evidence="1">Riboflavin kinase</fullName>
        <shortName evidence="1">RFK</shortName>
        <ecNumber evidence="1">2.7.1.161</ecNumber>
    </recommendedName>
    <alternativeName>
        <fullName evidence="1">CTP-dependent riboflavin kinase</fullName>
    </alternativeName>
    <alternativeName>
        <fullName evidence="1">CTP:riboflavin 5'-phosphotransferase</fullName>
    </alternativeName>
    <alternativeName>
        <fullName evidence="1">Flavokinase</fullName>
    </alternativeName>
</protein>
<keyword id="KW-0285">Flavoprotein</keyword>
<keyword id="KW-0288">FMN</keyword>
<keyword id="KW-0418">Kinase</keyword>
<keyword id="KW-0460">Magnesium</keyword>
<keyword id="KW-0479">Metal-binding</keyword>
<keyword id="KW-0547">Nucleotide-binding</keyword>
<keyword id="KW-1185">Reference proteome</keyword>
<keyword id="KW-0808">Transferase</keyword>
<organism>
    <name type="scientific">Methanothermobacter thermautotrophicus (strain ATCC 29096 / DSM 1053 / JCM 10044 / NBRC 100330 / Delta H)</name>
    <name type="common">Methanobacterium thermoautotrophicum</name>
    <dbReference type="NCBI Taxonomy" id="187420"/>
    <lineage>
        <taxon>Archaea</taxon>
        <taxon>Methanobacteriati</taxon>
        <taxon>Methanobacteriota</taxon>
        <taxon>Methanomada group</taxon>
        <taxon>Methanobacteria</taxon>
        <taxon>Methanobacteriales</taxon>
        <taxon>Methanobacteriaceae</taxon>
        <taxon>Methanothermobacter</taxon>
    </lineage>
</organism>
<reference key="1">
    <citation type="journal article" date="1997" name="J. Bacteriol.">
        <title>Complete genome sequence of Methanobacterium thermoautotrophicum deltaH: functional analysis and comparative genomics.</title>
        <authorList>
            <person name="Smith D.R."/>
            <person name="Doucette-Stamm L.A."/>
            <person name="Deloughery C."/>
            <person name="Lee H.-M."/>
            <person name="Dubois J."/>
            <person name="Aldredge T."/>
            <person name="Bashirzadeh R."/>
            <person name="Blakely D."/>
            <person name="Cook R."/>
            <person name="Gilbert K."/>
            <person name="Harrison D."/>
            <person name="Hoang L."/>
            <person name="Keagle P."/>
            <person name="Lumm W."/>
            <person name="Pothier B."/>
            <person name="Qiu D."/>
            <person name="Spadafora R."/>
            <person name="Vicare R."/>
            <person name="Wang Y."/>
            <person name="Wierzbowski J."/>
            <person name="Gibson R."/>
            <person name="Jiwani N."/>
            <person name="Caruso A."/>
            <person name="Bush D."/>
            <person name="Safer H."/>
            <person name="Patwell D."/>
            <person name="Prabhakar S."/>
            <person name="McDougall S."/>
            <person name="Shimer G."/>
            <person name="Goyal A."/>
            <person name="Pietrovski S."/>
            <person name="Church G.M."/>
            <person name="Daniels C.J."/>
            <person name="Mao J.-I."/>
            <person name="Rice P."/>
            <person name="Noelling J."/>
            <person name="Reeve J.N."/>
        </authorList>
    </citation>
    <scope>NUCLEOTIDE SEQUENCE [LARGE SCALE GENOMIC DNA]</scope>
    <source>
        <strain>ATCC 29096 / DSM 1053 / JCM 10044 / NBRC 100330 / Delta H</strain>
    </source>
</reference>
<name>RIFK_METTH</name>
<evidence type="ECO:0000255" key="1">
    <source>
        <dbReference type="HAMAP-Rule" id="MF_01285"/>
    </source>
</evidence>
<feature type="chain" id="PRO_0000322068" description="Riboflavin kinase">
    <location>
        <begin position="1"/>
        <end position="122"/>
    </location>
</feature>
<feature type="binding site" evidence="1">
    <location>
        <begin position="4"/>
        <end position="9"/>
    </location>
    <ligand>
        <name>CDP</name>
        <dbReference type="ChEBI" id="CHEBI:58069"/>
    </ligand>
</feature>
<feature type="binding site" evidence="1">
    <location>
        <position position="33"/>
    </location>
    <ligand>
        <name>Mg(2+)</name>
        <dbReference type="ChEBI" id="CHEBI:18420"/>
    </ligand>
</feature>
<feature type="binding site" evidence="1">
    <location>
        <position position="35"/>
    </location>
    <ligand>
        <name>Mg(2+)</name>
        <dbReference type="ChEBI" id="CHEBI:18420"/>
    </ligand>
</feature>
<feature type="binding site" evidence="1">
    <location>
        <position position="84"/>
    </location>
    <ligand>
        <name>FMN</name>
        <dbReference type="ChEBI" id="CHEBI:58210"/>
    </ligand>
</feature>
<feature type="binding site" evidence="1">
    <location>
        <position position="92"/>
    </location>
    <ligand>
        <name>FMN</name>
        <dbReference type="ChEBI" id="CHEBI:58210"/>
    </ligand>
</feature>
<feature type="binding site" evidence="1">
    <location>
        <begin position="97"/>
        <end position="100"/>
    </location>
    <ligand>
        <name>CDP</name>
        <dbReference type="ChEBI" id="CHEBI:58069"/>
    </ligand>
</feature>
<dbReference type="EC" id="2.7.1.161" evidence="1"/>
<dbReference type="EMBL" id="AE000666">
    <property type="protein sequence ID" value="AAB85975.1"/>
    <property type="molecule type" value="Genomic_DNA"/>
</dbReference>
<dbReference type="PIR" id="B69067">
    <property type="entry name" value="B69067"/>
</dbReference>
<dbReference type="RefSeq" id="WP_010877110.1">
    <property type="nucleotide sequence ID" value="NC_000916.1"/>
</dbReference>
<dbReference type="SMR" id="O27544"/>
<dbReference type="FunCoup" id="O27544">
    <property type="interactions" value="20"/>
</dbReference>
<dbReference type="STRING" id="187420.MTH_1500"/>
<dbReference type="PaxDb" id="187420-MTH_1500"/>
<dbReference type="EnsemblBacteria" id="AAB85975">
    <property type="protein sequence ID" value="AAB85975"/>
    <property type="gene ID" value="MTH_1500"/>
</dbReference>
<dbReference type="KEGG" id="mth:MTH_1500"/>
<dbReference type="HOGENOM" id="CLU_140165_0_0_2"/>
<dbReference type="InParanoid" id="O27544"/>
<dbReference type="UniPathway" id="UPA00276">
    <property type="reaction ID" value="UER00929"/>
</dbReference>
<dbReference type="Proteomes" id="UP000005223">
    <property type="component" value="Chromosome"/>
</dbReference>
<dbReference type="GO" id="GO:0000287">
    <property type="term" value="F:magnesium ion binding"/>
    <property type="evidence" value="ECO:0007669"/>
    <property type="project" value="UniProtKB-UniRule"/>
</dbReference>
<dbReference type="GO" id="GO:0000166">
    <property type="term" value="F:nucleotide binding"/>
    <property type="evidence" value="ECO:0007669"/>
    <property type="project" value="UniProtKB-UniRule"/>
</dbReference>
<dbReference type="GO" id="GO:0008531">
    <property type="term" value="F:riboflavin kinase activity"/>
    <property type="evidence" value="ECO:0007669"/>
    <property type="project" value="InterPro"/>
</dbReference>
<dbReference type="GO" id="GO:0009398">
    <property type="term" value="P:FMN biosynthetic process"/>
    <property type="evidence" value="ECO:0007669"/>
    <property type="project" value="UniProtKB-UniRule"/>
</dbReference>
<dbReference type="GO" id="GO:0009231">
    <property type="term" value="P:riboflavin biosynthetic process"/>
    <property type="evidence" value="ECO:0007669"/>
    <property type="project" value="InterPro"/>
</dbReference>
<dbReference type="Gene3D" id="2.40.30.30">
    <property type="entry name" value="Riboflavin kinase-like"/>
    <property type="match status" value="1"/>
</dbReference>
<dbReference type="HAMAP" id="MF_01285">
    <property type="entry name" value="Riboflavin_kinase"/>
    <property type="match status" value="1"/>
</dbReference>
<dbReference type="InterPro" id="IPR039063">
    <property type="entry name" value="RibK_CTP-dep"/>
</dbReference>
<dbReference type="InterPro" id="IPR023470">
    <property type="entry name" value="Riboflavin_kinase_archaeal"/>
</dbReference>
<dbReference type="InterPro" id="IPR023602">
    <property type="entry name" value="Riboflavin_kinase_CTP-dep"/>
</dbReference>
<dbReference type="InterPro" id="IPR023465">
    <property type="entry name" value="Riboflavin_kinase_dom_sf"/>
</dbReference>
<dbReference type="PANTHER" id="PTHR40706">
    <property type="entry name" value="RIBOFLAVIN KINASE"/>
    <property type="match status" value="1"/>
</dbReference>
<dbReference type="PANTHER" id="PTHR40706:SF1">
    <property type="entry name" value="RIBOFLAVIN KINASE"/>
    <property type="match status" value="1"/>
</dbReference>
<dbReference type="Pfam" id="PF01982">
    <property type="entry name" value="CTP-dep_RFKase"/>
    <property type="match status" value="1"/>
</dbReference>
<dbReference type="SUPFAM" id="SSF82114">
    <property type="entry name" value="Riboflavin kinase-like"/>
    <property type="match status" value="1"/>
</dbReference>